<accession>P65018</accession>
<accession>A0A1R3Y1L7</accession>
<accession>Q50647</accession>
<accession>X2BLC4</accession>
<feature type="chain" id="PRO_0000104055" description="Uncharacterized protein Mb2604">
    <location>
        <begin position="1"/>
        <end position="167"/>
    </location>
</feature>
<reference key="1">
    <citation type="journal article" date="2003" name="Proc. Natl. Acad. Sci. U.S.A.">
        <title>The complete genome sequence of Mycobacterium bovis.</title>
        <authorList>
            <person name="Garnier T."/>
            <person name="Eiglmeier K."/>
            <person name="Camus J.-C."/>
            <person name="Medina N."/>
            <person name="Mansoor H."/>
            <person name="Pryor M."/>
            <person name="Duthoy S."/>
            <person name="Grondin S."/>
            <person name="Lacroix C."/>
            <person name="Monsempe C."/>
            <person name="Simon S."/>
            <person name="Harris B."/>
            <person name="Atkin R."/>
            <person name="Doggett J."/>
            <person name="Mayes R."/>
            <person name="Keating L."/>
            <person name="Wheeler P.R."/>
            <person name="Parkhill J."/>
            <person name="Barrell B.G."/>
            <person name="Cole S.T."/>
            <person name="Gordon S.V."/>
            <person name="Hewinson R.G."/>
        </authorList>
    </citation>
    <scope>NUCLEOTIDE SEQUENCE [LARGE SCALE GENOMIC DNA]</scope>
    <source>
        <strain>ATCC BAA-935 / AF2122/97</strain>
    </source>
</reference>
<reference key="2">
    <citation type="journal article" date="2017" name="Genome Announc.">
        <title>Updated reference genome sequence and annotation of Mycobacterium bovis AF2122/97.</title>
        <authorList>
            <person name="Malone K.M."/>
            <person name="Farrell D."/>
            <person name="Stuber T.P."/>
            <person name="Schubert O.T."/>
            <person name="Aebersold R."/>
            <person name="Robbe-Austerman S."/>
            <person name="Gordon S.V."/>
        </authorList>
    </citation>
    <scope>NUCLEOTIDE SEQUENCE [LARGE SCALE GENOMIC DNA]</scope>
    <scope>GENOME REANNOTATION</scope>
    <source>
        <strain>ATCC BAA-935 / AF2122/97</strain>
    </source>
</reference>
<proteinExistence type="predicted"/>
<organism>
    <name type="scientific">Mycobacterium bovis (strain ATCC BAA-935 / AF2122/97)</name>
    <dbReference type="NCBI Taxonomy" id="233413"/>
    <lineage>
        <taxon>Bacteria</taxon>
        <taxon>Bacillati</taxon>
        <taxon>Actinomycetota</taxon>
        <taxon>Actinomycetes</taxon>
        <taxon>Mycobacteriales</taxon>
        <taxon>Mycobacteriaceae</taxon>
        <taxon>Mycobacterium</taxon>
        <taxon>Mycobacterium tuberculosis complex</taxon>
    </lineage>
</organism>
<sequence length="167" mass="19002">MYPCERVGLSFTETAPYLFRNTVDLAITPEQLFEVLADPQAWPRWATVITKVTWTSPEPFGAGTTRIVEMRGGIVGDEEFISWEPFTRMAFRFNECSTRAVGAFAEDYRVQAIPGGCRLTWTMAQKLAGPARPALFVFRPLLNLALRRFLRNLRRYTDARFAAAQQS</sequence>
<dbReference type="EMBL" id="LT708304">
    <property type="protein sequence ID" value="SIU01222.1"/>
    <property type="molecule type" value="Genomic_DNA"/>
</dbReference>
<dbReference type="RefSeq" id="NP_856250.1">
    <property type="nucleotide sequence ID" value="NC_002945.3"/>
</dbReference>
<dbReference type="RefSeq" id="WP_003413345.1">
    <property type="nucleotide sequence ID" value="NC_002945.4"/>
</dbReference>
<dbReference type="SMR" id="P65018"/>
<dbReference type="KEGG" id="mbo:BQ2027_MB2604"/>
<dbReference type="PATRIC" id="fig|233413.5.peg.2863"/>
<dbReference type="Proteomes" id="UP000001419">
    <property type="component" value="Chromosome"/>
</dbReference>
<dbReference type="CDD" id="cd07821">
    <property type="entry name" value="PYR_PYL_RCAR_like"/>
    <property type="match status" value="1"/>
</dbReference>
<dbReference type="Gene3D" id="3.30.530.20">
    <property type="match status" value="1"/>
</dbReference>
<dbReference type="InterPro" id="IPR019587">
    <property type="entry name" value="Polyketide_cyclase/dehydratase"/>
</dbReference>
<dbReference type="InterPro" id="IPR023393">
    <property type="entry name" value="START-like_dom_sf"/>
</dbReference>
<dbReference type="Pfam" id="PF10604">
    <property type="entry name" value="Polyketide_cyc2"/>
    <property type="match status" value="1"/>
</dbReference>
<dbReference type="SUPFAM" id="SSF55961">
    <property type="entry name" value="Bet v1-like"/>
    <property type="match status" value="1"/>
</dbReference>
<protein>
    <recommendedName>
        <fullName>Uncharacterized protein Mb2604</fullName>
    </recommendedName>
</protein>
<name>Y2604_MYCBO</name>
<keyword id="KW-1185">Reference proteome</keyword>
<gene>
    <name type="ordered locus">BQ2027_MB2604</name>
</gene>